<dbReference type="EMBL" id="AB026654">
    <property type="protein sequence ID" value="BAB01795.1"/>
    <property type="molecule type" value="Genomic_DNA"/>
</dbReference>
<dbReference type="EMBL" id="CP002686">
    <property type="protein sequence ID" value="AEE76132.1"/>
    <property type="molecule type" value="Genomic_DNA"/>
</dbReference>
<dbReference type="EMBL" id="BT024603">
    <property type="protein sequence ID" value="ABD43001.1"/>
    <property type="molecule type" value="mRNA"/>
</dbReference>
<dbReference type="EMBL" id="AY084330">
    <property type="protein sequence ID" value="AAM60914.1"/>
    <property type="molecule type" value="mRNA"/>
</dbReference>
<dbReference type="RefSeq" id="NP_566616.1">
    <property type="nucleotide sequence ID" value="NM_112755.2"/>
</dbReference>
<dbReference type="BioGRID" id="6733">
    <property type="interactions" value="6"/>
</dbReference>
<dbReference type="FunCoup" id="Q8LGD5">
    <property type="interactions" value="314"/>
</dbReference>
<dbReference type="IntAct" id="Q8LGD5">
    <property type="interactions" value="4"/>
</dbReference>
<dbReference type="MINT" id="Q8LGD5"/>
<dbReference type="STRING" id="3702.Q8LGD5"/>
<dbReference type="iPTMnet" id="Q8LGD5"/>
<dbReference type="PaxDb" id="3702-AT3G18690.1"/>
<dbReference type="ProteomicsDB" id="238709"/>
<dbReference type="EnsemblPlants" id="AT3G18690.1">
    <property type="protein sequence ID" value="AT3G18690.1"/>
    <property type="gene ID" value="AT3G18690"/>
</dbReference>
<dbReference type="GeneID" id="821400"/>
<dbReference type="Gramene" id="AT3G18690.1">
    <property type="protein sequence ID" value="AT3G18690.1"/>
    <property type="gene ID" value="AT3G18690"/>
</dbReference>
<dbReference type="KEGG" id="ath:AT3G18690"/>
<dbReference type="Araport" id="AT3G18690"/>
<dbReference type="TAIR" id="AT3G18690">
    <property type="gene designation" value="MKS1"/>
</dbReference>
<dbReference type="eggNOG" id="ENOG502S2J0">
    <property type="taxonomic scope" value="Eukaryota"/>
</dbReference>
<dbReference type="HOGENOM" id="CLU_074462_1_0_1"/>
<dbReference type="InParanoid" id="Q8LGD5"/>
<dbReference type="OMA" id="DNDVKLM"/>
<dbReference type="PhylomeDB" id="Q8LGD5"/>
<dbReference type="PRO" id="PR:Q8LGD5"/>
<dbReference type="Proteomes" id="UP000006548">
    <property type="component" value="Chromosome 3"/>
</dbReference>
<dbReference type="ExpressionAtlas" id="Q8LGD5">
    <property type="expression patterns" value="baseline and differential"/>
</dbReference>
<dbReference type="GO" id="GO:0005634">
    <property type="term" value="C:nucleus"/>
    <property type="evidence" value="ECO:0000314"/>
    <property type="project" value="TAIR"/>
</dbReference>
<dbReference type="GO" id="GO:0006952">
    <property type="term" value="P:defense response"/>
    <property type="evidence" value="ECO:0007669"/>
    <property type="project" value="UniProtKB-KW"/>
</dbReference>
<dbReference type="GO" id="GO:0002758">
    <property type="term" value="P:innate immune response-activating signaling pathway"/>
    <property type="evidence" value="ECO:0000315"/>
    <property type="project" value="TAIR"/>
</dbReference>
<dbReference type="InterPro" id="IPR008889">
    <property type="entry name" value="VQ"/>
</dbReference>
<dbReference type="InterPro" id="IPR039607">
    <property type="entry name" value="VQ_8/17/18/20/21/25"/>
</dbReference>
<dbReference type="PANTHER" id="PTHR33143">
    <property type="entry name" value="F16F4.1 PROTEIN-RELATED"/>
    <property type="match status" value="1"/>
</dbReference>
<dbReference type="PANTHER" id="PTHR33143:SF50">
    <property type="entry name" value="PROTEIN MKS1"/>
    <property type="match status" value="1"/>
</dbReference>
<dbReference type="Pfam" id="PF05678">
    <property type="entry name" value="VQ"/>
    <property type="match status" value="1"/>
</dbReference>
<evidence type="ECO:0000256" key="1">
    <source>
        <dbReference type="SAM" id="MobiDB-lite"/>
    </source>
</evidence>
<evidence type="ECO:0000269" key="2">
    <source>
    </source>
</evidence>
<evidence type="ECO:0000269" key="3">
    <source>
    </source>
</evidence>
<evidence type="ECO:0000303" key="4">
    <source>
    </source>
</evidence>
<evidence type="ECO:0000305" key="5"/>
<evidence type="ECO:0007744" key="6">
    <source>
    </source>
</evidence>
<accession>Q8LGD5</accession>
<accession>Q9LSA8</accession>
<proteinExistence type="evidence at protein level"/>
<comment type="function">
    <text evidence="2">Regulator of plant defense response. May contribute to MPK4-regulated defense activation by coupling the kinase to specific WRKY transcription factors.</text>
</comment>
<comment type="subunit">
    <text evidence="2">Interacts with MPK4, WRKY25 and WRKY33.</text>
</comment>
<comment type="interaction">
    <interactant intactId="EBI-1392198">
        <id>Q8LGD5</id>
    </interactant>
    <interactant intactId="EBI-994375">
        <id>Q39024</id>
        <label>MPK4</label>
    </interactant>
    <organismsDiffer>false</organismsDiffer>
    <experiments>9</experiments>
</comment>
<comment type="interaction">
    <interactant intactId="EBI-1392198">
        <id>Q8LGD5</id>
    </interactant>
    <interactant intactId="EBI-1392386">
        <id>O22921</id>
        <label>WRKY25</label>
    </interactant>
    <organismsDiffer>false</organismsDiffer>
    <experiments>3</experiments>
</comment>
<comment type="interaction">
    <interactant intactId="EBI-1392198">
        <id>Q8LGD5</id>
    </interactant>
    <interactant intactId="EBI-1392374">
        <id>Q8S8P5</id>
        <label>WRKY33</label>
    </interactant>
    <organismsDiffer>false</organismsDiffer>
    <experiments>5</experiments>
</comment>
<comment type="subcellular location">
    <subcellularLocation>
        <location evidence="2">Nucleus</location>
    </subcellularLocation>
</comment>
<comment type="PTM">
    <text evidence="2 3">Phosphorylated on serine residue by MPK4.</text>
</comment>
<feature type="chain" id="PRO_0000245828" description="Protein MKS1">
    <location>
        <begin position="1"/>
        <end position="222"/>
    </location>
</feature>
<feature type="region of interest" description="Disordered" evidence="1">
    <location>
        <begin position="1"/>
        <end position="61"/>
    </location>
</feature>
<feature type="region of interest" description="Disordered" evidence="1">
    <location>
        <begin position="105"/>
        <end position="130"/>
    </location>
</feature>
<feature type="short sequence motif" description="VQ" evidence="5">
    <location>
        <begin position="83"/>
        <end position="92"/>
    </location>
</feature>
<feature type="compositionally biased region" description="Polar residues" evidence="1">
    <location>
        <begin position="12"/>
        <end position="21"/>
    </location>
</feature>
<feature type="compositionally biased region" description="Basic residues" evidence="1">
    <location>
        <begin position="37"/>
        <end position="46"/>
    </location>
</feature>
<feature type="compositionally biased region" description="Pro residues" evidence="1">
    <location>
        <begin position="47"/>
        <end position="61"/>
    </location>
</feature>
<feature type="modified residue" description="Phosphoserine" evidence="2">
    <location>
        <position position="30"/>
    </location>
</feature>
<feature type="modified residue" description="Phosphoserine" evidence="3">
    <location>
        <position position="72"/>
    </location>
</feature>
<feature type="modified residue" description="Phosphoserine" evidence="3">
    <location>
        <position position="108"/>
    </location>
</feature>
<feature type="modified residue" description="Phosphoserine" evidence="3 6">
    <location>
        <position position="120"/>
    </location>
</feature>
<feature type="sequence conflict" description="In Ref. 4; AAM60914." evidence="5" ref="4">
    <original>L</original>
    <variation>M</variation>
    <location>
        <position position="160"/>
    </location>
</feature>
<organism>
    <name type="scientific">Arabidopsis thaliana</name>
    <name type="common">Mouse-ear cress</name>
    <dbReference type="NCBI Taxonomy" id="3702"/>
    <lineage>
        <taxon>Eukaryota</taxon>
        <taxon>Viridiplantae</taxon>
        <taxon>Streptophyta</taxon>
        <taxon>Embryophyta</taxon>
        <taxon>Tracheophyta</taxon>
        <taxon>Spermatophyta</taxon>
        <taxon>Magnoliopsida</taxon>
        <taxon>eudicotyledons</taxon>
        <taxon>Gunneridae</taxon>
        <taxon>Pentapetalae</taxon>
        <taxon>rosids</taxon>
        <taxon>malvids</taxon>
        <taxon>Brassicales</taxon>
        <taxon>Brassicaceae</taxon>
        <taxon>Camelineae</taxon>
        <taxon>Arabidopsis</taxon>
    </lineage>
</organism>
<reference key="1">
    <citation type="journal article" date="2000" name="DNA Res.">
        <title>Structural analysis of Arabidopsis thaliana chromosome 3. I. Sequence features of the regions of 4,504,864 bp covered by sixty P1 and TAC clones.</title>
        <authorList>
            <person name="Sato S."/>
            <person name="Nakamura Y."/>
            <person name="Kaneko T."/>
            <person name="Katoh T."/>
            <person name="Asamizu E."/>
            <person name="Tabata S."/>
        </authorList>
    </citation>
    <scope>NUCLEOTIDE SEQUENCE [LARGE SCALE GENOMIC DNA]</scope>
    <source>
        <strain>cv. Columbia</strain>
    </source>
</reference>
<reference key="2">
    <citation type="journal article" date="2017" name="Plant J.">
        <title>Araport11: a complete reannotation of the Arabidopsis thaliana reference genome.</title>
        <authorList>
            <person name="Cheng C.Y."/>
            <person name="Krishnakumar V."/>
            <person name="Chan A.P."/>
            <person name="Thibaud-Nissen F."/>
            <person name="Schobel S."/>
            <person name="Town C.D."/>
        </authorList>
    </citation>
    <scope>GENOME REANNOTATION</scope>
    <source>
        <strain>cv. Columbia</strain>
    </source>
</reference>
<reference key="3">
    <citation type="submission" date="2006-02" db="EMBL/GenBank/DDBJ databases">
        <title>Arabidopsis ORF clones.</title>
        <authorList>
            <person name="Shinn P."/>
            <person name="Chen H."/>
            <person name="Kim C.J."/>
            <person name="Ecker J.R."/>
        </authorList>
    </citation>
    <scope>NUCLEOTIDE SEQUENCE [LARGE SCALE MRNA]</scope>
    <source>
        <strain>cv. Columbia</strain>
    </source>
</reference>
<reference key="4">
    <citation type="submission" date="2002-03" db="EMBL/GenBank/DDBJ databases">
        <title>Full-length cDNA from Arabidopsis thaliana.</title>
        <authorList>
            <person name="Brover V.V."/>
            <person name="Troukhan M.E."/>
            <person name="Alexandrov N.A."/>
            <person name="Lu Y.-P."/>
            <person name="Flavell R.B."/>
            <person name="Feldmann K.A."/>
        </authorList>
    </citation>
    <scope>NUCLEOTIDE SEQUENCE [LARGE SCALE MRNA]</scope>
</reference>
<reference key="5">
    <citation type="journal article" date="2005" name="EMBO J.">
        <title>The MAP kinase substrate MKS1 is a regulator of plant defense responses.</title>
        <authorList>
            <person name="Andreasson E."/>
            <person name="Jenkins T."/>
            <person name="Brodersen P."/>
            <person name="Thorgrimsen S."/>
            <person name="Petersen N.H.T."/>
            <person name="Zhu S."/>
            <person name="Qiu J.-L."/>
            <person name="Micheelsen P."/>
            <person name="Rocher A."/>
            <person name="Petersen M."/>
            <person name="Newman M.-A."/>
            <person name="Bjoern Nielsen H."/>
            <person name="Hirt H."/>
            <person name="Somssich I.E."/>
            <person name="Mattsson O."/>
            <person name="Mundy J."/>
        </authorList>
    </citation>
    <scope>FUNCTION</scope>
    <scope>SUBCELLULAR LOCATION</scope>
    <scope>PHOSPHORYLATION AT SER-30</scope>
    <scope>INTERACTION WITH MPK4; WRKY25 AND WRKY33</scope>
</reference>
<reference key="6">
    <citation type="journal article" date="2007" name="Biochim. Biophys. Acta">
        <title>Phosphorylation sites of Arabidopsis MAP kinase substrate 1 (MKS1).</title>
        <authorList>
            <person name="Caspersen M.B."/>
            <person name="Qiu J.-L."/>
            <person name="Zhang X."/>
            <person name="Andreasson E."/>
            <person name="Naested H."/>
            <person name="Mundy J."/>
            <person name="Svensson B."/>
        </authorList>
    </citation>
    <scope>PHOSPHORYLATION AT SER-72; SER-108 AND SER-120</scope>
</reference>
<reference key="7">
    <citation type="journal article" date="2009" name="Plant Physiol.">
        <title>Large-scale Arabidopsis phosphoproteome profiling reveals novel chloroplast kinase substrates and phosphorylation networks.</title>
        <authorList>
            <person name="Reiland S."/>
            <person name="Messerli G."/>
            <person name="Baerenfaller K."/>
            <person name="Gerrits B."/>
            <person name="Endler A."/>
            <person name="Grossmann J."/>
            <person name="Gruissem W."/>
            <person name="Baginsky S."/>
        </authorList>
    </citation>
    <scope>PHOSPHORYLATION [LARGE SCALE ANALYSIS] AT SER-120</scope>
    <scope>IDENTIFICATION BY MASS SPECTROMETRY [LARGE SCALE ANALYSIS]</scope>
</reference>
<reference key="8">
    <citation type="journal article" date="2012" name="Plant Physiol.">
        <title>Structural and functional analysis of VQ motif-containing proteins in Arabidopsis as interacting proteins of WRKY transcription factors.</title>
        <authorList>
            <person name="Cheng Y."/>
            <person name="Zhou Y."/>
            <person name="Yang Y."/>
            <person name="Chi Y.J."/>
            <person name="Zhou J."/>
            <person name="Chen J.Y."/>
            <person name="Wang F."/>
            <person name="Fan B."/>
            <person name="Shi K."/>
            <person name="Zhou Y.H."/>
            <person name="Yu J.Q."/>
            <person name="Chen Z."/>
        </authorList>
    </citation>
    <scope>GENE FAMILY</scope>
    <scope>NOMENCLATURE</scope>
</reference>
<protein>
    <recommendedName>
        <fullName>Protein MKS1</fullName>
    </recommendedName>
    <alternativeName>
        <fullName>Protein MAP kinase 4 substrate 1</fullName>
    </alternativeName>
    <alternativeName>
        <fullName evidence="4">VQ motif-containing protein 21</fullName>
        <shortName evidence="4">AtVQ21</shortName>
    </alternativeName>
</protein>
<keyword id="KW-0539">Nucleus</keyword>
<keyword id="KW-0597">Phosphoprotein</keyword>
<keyword id="KW-0611">Plant defense</keyword>
<keyword id="KW-1185">Reference proteome</keyword>
<sequence>MDPSEYFAGGNPSDQQNQKRQLQICGPRPSPLSVHKDSHKIKKPPKHPAPPPNRDQPPPYIPREPVVIYAVSPKVVHATASEFMNVVQRLTGISSGVFLESGGGGDVSPAARLASTENASPRGGKEPAARDETVEINTAMEEAAEFGGYAPGILSPSPALLPTASTGIFSPMYHQGGMFSPAIPLGLFSPAGFMSPFRSPGFTSLVASPTFADFFSHIWDQD</sequence>
<gene>
    <name type="primary">MKS1</name>
    <name evidence="4" type="synonym">VQ21</name>
    <name type="ordered locus">At3g18690</name>
    <name type="ORF">MVE11.5</name>
</gene>
<name>MKS1_ARATH</name>